<protein>
    <recommendedName>
        <fullName>Peptidyl-prolyl cis-trans isomerase A</fullName>
        <shortName>PPIase A</shortName>
        <ecNumber evidence="2">5.2.1.8</ecNumber>
    </recommendedName>
    <alternativeName>
        <fullName>Cyclophilin A</fullName>
    </alternativeName>
    <alternativeName>
        <fullName>Cyclosporin A-binding protein</fullName>
    </alternativeName>
    <alternativeName>
        <fullName>Rotamase A</fullName>
    </alternativeName>
    <component>
        <recommendedName>
            <fullName>Peptidyl-prolyl cis-trans isomerase A, N-terminally processed</fullName>
        </recommendedName>
    </component>
</protein>
<feature type="chain" id="PRO_0000423238" description="Peptidyl-prolyl cis-trans isomerase A">
    <location>
        <begin position="1"/>
        <end position="164"/>
    </location>
</feature>
<feature type="initiator methionine" description="Removed; alternate" evidence="2">
    <location>
        <position position="1"/>
    </location>
</feature>
<feature type="chain" id="PRO_0000064114" description="Peptidyl-prolyl cis-trans isomerase A, N-terminally processed">
    <location>
        <begin position="2"/>
        <end position="164"/>
    </location>
</feature>
<feature type="domain" description="PPIase cyclophilin-type" evidence="4">
    <location>
        <begin position="7"/>
        <end position="163"/>
    </location>
</feature>
<feature type="modified residue" description="N-acetylmethionine" evidence="2">
    <location>
        <position position="1"/>
    </location>
</feature>
<feature type="modified residue" description="N-acetylvaline; in Peptidyl-prolyl cis-trans isomerase A, N-terminally processed" evidence="2">
    <location>
        <position position="2"/>
    </location>
</feature>
<feature type="modified residue" description="N6-acetyllysine; alternate" evidence="2">
    <location>
        <position position="28"/>
    </location>
</feature>
<feature type="modified residue" description="N6-acetyllysine" evidence="2">
    <location>
        <position position="44"/>
    </location>
</feature>
<feature type="modified residue" description="N6-acetyllysine" evidence="2">
    <location>
        <position position="76"/>
    </location>
</feature>
<feature type="modified residue" description="Phosphoserine" evidence="2">
    <location>
        <position position="77"/>
    </location>
</feature>
<feature type="modified residue" description="N6-acetyllysine; alternate" evidence="2">
    <location>
        <position position="82"/>
    </location>
</feature>
<feature type="modified residue" description="Phosphothreonine" evidence="2">
    <location>
        <position position="93"/>
    </location>
</feature>
<feature type="modified residue" description="N6-acetyllysine" evidence="2">
    <location>
        <position position="125"/>
    </location>
</feature>
<feature type="modified residue" description="N6-acetyllysine" evidence="1">
    <location>
        <position position="133"/>
    </location>
</feature>
<feature type="glycosylation site" description="N-linked (GlcNAc...) asparagine" evidence="3">
    <location>
        <position position="108"/>
    </location>
</feature>
<feature type="cross-link" description="Glycyl lysine isopeptide (Lys-Gly) (interchain with G-Cter in SUMO2); alternate" evidence="2">
    <location>
        <position position="28"/>
    </location>
</feature>
<feature type="cross-link" description="Glycyl lysine isopeptide (Lys-Gly) (interchain with G-Cter in ubiquitin); alternate" evidence="2">
    <location>
        <position position="28"/>
    </location>
</feature>
<feature type="cross-link" description="Glycyl lysine isopeptide (Lys-Gly) (interchain with G-Cter in SUMO2); alternate" evidence="2">
    <location>
        <position position="82"/>
    </location>
</feature>
<keyword id="KW-0007">Acetylation</keyword>
<keyword id="KW-0053">Apoptosis</keyword>
<keyword id="KW-0963">Cytoplasm</keyword>
<keyword id="KW-0325">Glycoprotein</keyword>
<keyword id="KW-0413">Isomerase</keyword>
<keyword id="KW-1017">Isopeptide bond</keyword>
<keyword id="KW-0539">Nucleus</keyword>
<keyword id="KW-0597">Phosphoprotein</keyword>
<keyword id="KW-1185">Reference proteome</keyword>
<keyword id="KW-0697">Rotamase</keyword>
<keyword id="KW-0964">Secreted</keyword>
<keyword id="KW-0832">Ubl conjugation</keyword>
<proteinExistence type="evidence at transcript level"/>
<dbReference type="EC" id="5.2.1.8" evidence="2"/>
<dbReference type="EMBL" id="AY029366">
    <property type="protein sequence ID" value="AAK33125.1"/>
    <property type="molecule type" value="mRNA"/>
</dbReference>
<dbReference type="RefSeq" id="NP_001009370.1">
    <property type="nucleotide sequence ID" value="NM_001009370.1"/>
</dbReference>
<dbReference type="SMR" id="Q8HXS3"/>
<dbReference type="STRING" id="9685.ENSFCAP00000056543"/>
<dbReference type="GlyCosmos" id="Q8HXS3">
    <property type="glycosylation" value="1 site, No reported glycans"/>
</dbReference>
<dbReference type="PaxDb" id="9685-ENSFCAP00000008491"/>
<dbReference type="GeneID" id="493966"/>
<dbReference type="KEGG" id="fca:493966"/>
<dbReference type="CTD" id="5478"/>
<dbReference type="eggNOG" id="KOG0865">
    <property type="taxonomic scope" value="Eukaryota"/>
</dbReference>
<dbReference type="InParanoid" id="Q8HXS3"/>
<dbReference type="OrthoDB" id="9768325at2759"/>
<dbReference type="TreeFam" id="TF316719"/>
<dbReference type="Proteomes" id="UP000011712">
    <property type="component" value="Unplaced"/>
</dbReference>
<dbReference type="GO" id="GO:0005737">
    <property type="term" value="C:cytoplasm"/>
    <property type="evidence" value="ECO:0000250"/>
    <property type="project" value="UniProtKB"/>
</dbReference>
<dbReference type="GO" id="GO:0005829">
    <property type="term" value="C:cytosol"/>
    <property type="evidence" value="ECO:0000250"/>
    <property type="project" value="UniProtKB"/>
</dbReference>
<dbReference type="GO" id="GO:0005576">
    <property type="term" value="C:extracellular region"/>
    <property type="evidence" value="ECO:0000250"/>
    <property type="project" value="UniProtKB"/>
</dbReference>
<dbReference type="GO" id="GO:0005634">
    <property type="term" value="C:nucleus"/>
    <property type="evidence" value="ECO:0000250"/>
    <property type="project" value="UniProtKB"/>
</dbReference>
<dbReference type="GO" id="GO:0016018">
    <property type="term" value="F:cyclosporin A binding"/>
    <property type="evidence" value="ECO:0000318"/>
    <property type="project" value="GO_Central"/>
</dbReference>
<dbReference type="GO" id="GO:1904399">
    <property type="term" value="F:heparan sulfate binding"/>
    <property type="evidence" value="ECO:0000250"/>
    <property type="project" value="UniProtKB"/>
</dbReference>
<dbReference type="GO" id="GO:0005178">
    <property type="term" value="F:integrin binding"/>
    <property type="evidence" value="ECO:0000250"/>
    <property type="project" value="UniProtKB"/>
</dbReference>
<dbReference type="GO" id="GO:0003755">
    <property type="term" value="F:peptidyl-prolyl cis-trans isomerase activity"/>
    <property type="evidence" value="ECO:0000250"/>
    <property type="project" value="UniProtKB"/>
</dbReference>
<dbReference type="GO" id="GO:0032148">
    <property type="term" value="P:activation of protein kinase B activity"/>
    <property type="evidence" value="ECO:0000250"/>
    <property type="project" value="UniProtKB"/>
</dbReference>
<dbReference type="GO" id="GO:0006915">
    <property type="term" value="P:apoptotic process"/>
    <property type="evidence" value="ECO:0000250"/>
    <property type="project" value="UniProtKB"/>
</dbReference>
<dbReference type="GO" id="GO:0060352">
    <property type="term" value="P:cell adhesion molecule production"/>
    <property type="evidence" value="ECO:0000250"/>
    <property type="project" value="UniProtKB"/>
</dbReference>
<dbReference type="GO" id="GO:0034599">
    <property type="term" value="P:cellular response to oxidative stress"/>
    <property type="evidence" value="ECO:0000250"/>
    <property type="project" value="UniProtKB"/>
</dbReference>
<dbReference type="GO" id="GO:0042118">
    <property type="term" value="P:endothelial cell activation"/>
    <property type="evidence" value="ECO:0000250"/>
    <property type="project" value="UniProtKB"/>
</dbReference>
<dbReference type="GO" id="GO:0030595">
    <property type="term" value="P:leukocyte chemotaxis"/>
    <property type="evidence" value="ECO:0000250"/>
    <property type="project" value="UniProtKB"/>
</dbReference>
<dbReference type="GO" id="GO:1902176">
    <property type="term" value="P:negative regulation of oxidative stress-induced intrinsic apoptotic signaling pathway"/>
    <property type="evidence" value="ECO:0000250"/>
    <property type="project" value="UniProtKB"/>
</dbReference>
<dbReference type="GO" id="GO:0061944">
    <property type="term" value="P:negative regulation of protein K48-linked ubiquitination"/>
    <property type="evidence" value="ECO:0000250"/>
    <property type="project" value="UniProtKB"/>
</dbReference>
<dbReference type="GO" id="GO:0006469">
    <property type="term" value="P:negative regulation of protein kinase activity"/>
    <property type="evidence" value="ECO:0000250"/>
    <property type="project" value="UniProtKB"/>
</dbReference>
<dbReference type="GO" id="GO:0001933">
    <property type="term" value="P:negative regulation of protein phosphorylation"/>
    <property type="evidence" value="ECO:0000250"/>
    <property type="project" value="UniProtKB"/>
</dbReference>
<dbReference type="GO" id="GO:0032873">
    <property type="term" value="P:negative regulation of stress-activated MAPK cascade"/>
    <property type="evidence" value="ECO:0000250"/>
    <property type="project" value="UniProtKB"/>
</dbReference>
<dbReference type="GO" id="GO:0030593">
    <property type="term" value="P:neutrophil chemotaxis"/>
    <property type="evidence" value="ECO:0000250"/>
    <property type="project" value="UniProtKB"/>
</dbReference>
<dbReference type="GO" id="GO:0030168">
    <property type="term" value="P:platelet activation"/>
    <property type="evidence" value="ECO:0000250"/>
    <property type="project" value="UniProtKB"/>
</dbReference>
<dbReference type="GO" id="GO:0070527">
    <property type="term" value="P:platelet aggregation"/>
    <property type="evidence" value="ECO:0000250"/>
    <property type="project" value="UniProtKB"/>
</dbReference>
<dbReference type="GO" id="GO:0043410">
    <property type="term" value="P:positive regulation of MAPK cascade"/>
    <property type="evidence" value="ECO:0000250"/>
    <property type="project" value="UniProtKB"/>
</dbReference>
<dbReference type="GO" id="GO:0051092">
    <property type="term" value="P:positive regulation of NF-kappaB transcription factor activity"/>
    <property type="evidence" value="ECO:0000250"/>
    <property type="project" value="UniProtKB"/>
</dbReference>
<dbReference type="GO" id="GO:0001934">
    <property type="term" value="P:positive regulation of protein phosphorylation"/>
    <property type="evidence" value="ECO:0000250"/>
    <property type="project" value="UniProtKB"/>
</dbReference>
<dbReference type="GO" id="GO:0006457">
    <property type="term" value="P:protein folding"/>
    <property type="evidence" value="ECO:0000318"/>
    <property type="project" value="GO_Central"/>
</dbReference>
<dbReference type="GO" id="GO:0000413">
    <property type="term" value="P:protein peptidyl-prolyl isomerization"/>
    <property type="evidence" value="ECO:0000250"/>
    <property type="project" value="UniProtKB"/>
</dbReference>
<dbReference type="GO" id="GO:2001233">
    <property type="term" value="P:regulation of apoptotic signaling pathway"/>
    <property type="evidence" value="ECO:0000250"/>
    <property type="project" value="UniProtKB"/>
</dbReference>
<dbReference type="GO" id="GO:0045069">
    <property type="term" value="P:regulation of viral genome replication"/>
    <property type="evidence" value="ECO:0000250"/>
    <property type="project" value="UniProtKB"/>
</dbReference>
<dbReference type="CDD" id="cd01926">
    <property type="entry name" value="cyclophilin_ABH_like"/>
    <property type="match status" value="1"/>
</dbReference>
<dbReference type="FunFam" id="2.40.100.10:FF:000011">
    <property type="entry name" value="Peptidyl-prolyl cis-trans isomerase A"/>
    <property type="match status" value="1"/>
</dbReference>
<dbReference type="Gene3D" id="2.40.100.10">
    <property type="entry name" value="Cyclophilin-like"/>
    <property type="match status" value="1"/>
</dbReference>
<dbReference type="InterPro" id="IPR029000">
    <property type="entry name" value="Cyclophilin-like_dom_sf"/>
</dbReference>
<dbReference type="InterPro" id="IPR024936">
    <property type="entry name" value="Cyclophilin-type_PPIase"/>
</dbReference>
<dbReference type="InterPro" id="IPR020892">
    <property type="entry name" value="Cyclophilin-type_PPIase_CS"/>
</dbReference>
<dbReference type="InterPro" id="IPR002130">
    <property type="entry name" value="Cyclophilin-type_PPIase_dom"/>
</dbReference>
<dbReference type="PANTHER" id="PTHR11071">
    <property type="entry name" value="PEPTIDYL-PROLYL CIS-TRANS ISOMERASE"/>
    <property type="match status" value="1"/>
</dbReference>
<dbReference type="PANTHER" id="PTHR11071:SF490">
    <property type="entry name" value="PEPTIDYL-PROLYL CIS-TRANS ISOMERASE A"/>
    <property type="match status" value="1"/>
</dbReference>
<dbReference type="Pfam" id="PF00160">
    <property type="entry name" value="Pro_isomerase"/>
    <property type="match status" value="1"/>
</dbReference>
<dbReference type="PIRSF" id="PIRSF001467">
    <property type="entry name" value="Peptidylpro_ismrse"/>
    <property type="match status" value="1"/>
</dbReference>
<dbReference type="PRINTS" id="PR00153">
    <property type="entry name" value="CSAPPISMRASE"/>
</dbReference>
<dbReference type="SUPFAM" id="SSF50891">
    <property type="entry name" value="Cyclophilin-like"/>
    <property type="match status" value="1"/>
</dbReference>
<dbReference type="PROSITE" id="PS00170">
    <property type="entry name" value="CSA_PPIASE_1"/>
    <property type="match status" value="1"/>
</dbReference>
<dbReference type="PROSITE" id="PS50072">
    <property type="entry name" value="CSA_PPIASE_2"/>
    <property type="match status" value="1"/>
</dbReference>
<reference key="1">
    <citation type="journal article" date="2003" name="Eur. J. Neurosci.">
        <title>Differential display implicates cyclophilin A in adult cortical plasticity.</title>
        <authorList>
            <person name="Arckens L.H.M.C."/>
            <person name="Van der Gucht E."/>
            <person name="Van den Bergh G."/>
            <person name="Massie A."/>
            <person name="Leysen I."/>
            <person name="Vandenbussche E."/>
            <person name="Eysel U.T."/>
            <person name="Huybrechts R."/>
            <person name="Vandesande F."/>
        </authorList>
    </citation>
    <scope>NUCLEOTIDE SEQUENCE [MRNA]</scope>
    <source>
        <tissue>Brain</tissue>
    </source>
</reference>
<sequence length="164" mass="17870">MVNPIVFFDIAVDGEPLGRVSFDLFADKVPKTAENFRALSTGEKGFGYKGSCFHRIIPGFMCQGGDFTRHNGTGGKSIYGEKFDDENFILKHTGPGILSMANAGPNTNGSQFFICTAKTEWLDGKHVVFGMVKEGMNIVEAMERFGSRNGKTSKKITIADCGQI</sequence>
<comment type="function">
    <text evidence="1 2">Catalyzes the cis-trans isomerization of proline imidic peptide bonds in oligopeptides (By similarity). Exerts a strong chemotactic effect on leukocytes partly through activation of one of its membrane receptors BSG/CD147, initiating a signaling cascade that culminates in MAPK/ERK activation (By similarity). Activates endothelial cells (ECs) in a proinflammatory manner by stimulating activation of NF-kappa-B and ERK, JNK and p38 MAP-kinases and by inducing expression of adhesion molecules including SELE and VCAM1 (By similarity). Induces apoptosis in ECs by promoting the FOXO1-dependent expression of CCL2 and BCL2L11 which are involved in EC chemotaxis and apoptosis (By similarity). In response to oxidative stress, initiates proapoptotic and antiapoptotic signaling in ECs via activation of NF-kappa-B and AKT1 and up-regulation of antiapoptotic protein BCL2 (By similarity). Negatively regulates MAP3K5/ASK1 kinase activity, autophosphorylation and oxidative stress-induced apoptosis mediated by MAP3K5/ASK1 (By similarity). Necessary for the assembly of TARDBP in heterogeneous nuclear ribonucleoprotein (hnRNP) complexes and regulates TARDBP binding to RNA UG repeats and TARDBP-dependent expression of HDAC6, ATG7 and VCP which are involved in clearance of protein aggregates (By similarity). Plays an important role in platelet activation and aggregation (By similarity). Regulates calcium mobilization and integrin ITGA2B:ITGB3 bidirectional signaling via increased ROS production as well as by facilitating the interaction between integrin and the cell cytoskeleton (By similarity). Binds heparan sulfate glycosaminoglycans (By similarity).</text>
</comment>
<comment type="catalytic activity">
    <reaction evidence="2">
        <text>[protein]-peptidylproline (omega=180) = [protein]-peptidylproline (omega=0)</text>
        <dbReference type="Rhea" id="RHEA:16237"/>
        <dbReference type="Rhea" id="RHEA-COMP:10747"/>
        <dbReference type="Rhea" id="RHEA-COMP:10748"/>
        <dbReference type="ChEBI" id="CHEBI:83833"/>
        <dbReference type="ChEBI" id="CHEBI:83834"/>
        <dbReference type="EC" id="5.2.1.8"/>
    </reaction>
</comment>
<comment type="activity regulation">
    <text evidence="2">Binds cyclosporin A (CsA). CsA mediates some of its effects via an inhibitory action on PPIase.</text>
</comment>
<comment type="subunit">
    <text evidence="1 2">Interacts with protein phosphatase PPP3CA/calcineurin A (By similarity). Interacts with isoform 2 of BSG/CD147 (By similarity). Interacts with FOXO1; the interaction promotes FOXO1 dephosphorylation, nuclear accumulation and transcriptional activity (By similarity). Interacts with integrin ITGA2B:ITGB3; the interaction is ROS and peptidyl-prolyl cis-trans isomerase (PPIase) activity-dependent and is increased in the presence of thrombin (By similarity). Interacts with MAP3K5 (By similarity). Interacts with TARDBP; the interaction is dependent on the RNA-binding activity of TARDBP and the PPIase activity of PPIA/CYPA and the acetylation of PPIA/CYPA at Lys-125 favors the interaction (By similarity). Interacts with HNRNPA1, HNRNPA2B1, HNRNPC, RBMX, HNRNPK and HNRNPM (By similarity).</text>
</comment>
<comment type="subcellular location">
    <subcellularLocation>
        <location evidence="2">Cytoplasm</location>
    </subcellularLocation>
    <subcellularLocation>
        <location evidence="2">Secreted</location>
    </subcellularLocation>
    <subcellularLocation>
        <location evidence="2">Nucleus</location>
    </subcellularLocation>
    <text evidence="2">Secretion occurs in response to oxidative stress in vascular smooth muscle through a vesicular secretory pathway that involves actin remodeling and myosin II activation, and mediates ERK1/2 activation.</text>
</comment>
<comment type="PTM">
    <text evidence="2">Acetylation at Lys-125 markedly inhibits catalysis of cis to trans isomerization (By similarity). PPIA acetylation also antagonizes the immunosuppressive effects of cyclosporine by inhibiting the sequential steps of cyclosporine binding and calcineurin inhibition (By similarity). Acetylation at Lys-125 favors the interaction with TARDBP (By similarity).</text>
</comment>
<comment type="similarity">
    <text evidence="5">Belongs to the cyclophilin-type PPIase family. PPIase A subfamily.</text>
</comment>
<evidence type="ECO:0000250" key="1">
    <source>
        <dbReference type="UniProtKB" id="P17742"/>
    </source>
</evidence>
<evidence type="ECO:0000250" key="2">
    <source>
        <dbReference type="UniProtKB" id="P62937"/>
    </source>
</evidence>
<evidence type="ECO:0000255" key="3"/>
<evidence type="ECO:0000255" key="4">
    <source>
        <dbReference type="PROSITE-ProRule" id="PRU00156"/>
    </source>
</evidence>
<evidence type="ECO:0000305" key="5"/>
<accession>Q8HXS3</accession>
<gene>
    <name type="primary">PPIA</name>
    <name type="synonym">CYPA</name>
</gene>
<name>PPIA_FELCA</name>
<organism>
    <name type="scientific">Felis catus</name>
    <name type="common">Cat</name>
    <name type="synonym">Felis silvestris catus</name>
    <dbReference type="NCBI Taxonomy" id="9685"/>
    <lineage>
        <taxon>Eukaryota</taxon>
        <taxon>Metazoa</taxon>
        <taxon>Chordata</taxon>
        <taxon>Craniata</taxon>
        <taxon>Vertebrata</taxon>
        <taxon>Euteleostomi</taxon>
        <taxon>Mammalia</taxon>
        <taxon>Eutheria</taxon>
        <taxon>Laurasiatheria</taxon>
        <taxon>Carnivora</taxon>
        <taxon>Feliformia</taxon>
        <taxon>Felidae</taxon>
        <taxon>Felinae</taxon>
        <taxon>Felis</taxon>
    </lineage>
</organism>